<organism>
    <name type="scientific">Herminiimonas arsenicoxydans</name>
    <dbReference type="NCBI Taxonomy" id="204773"/>
    <lineage>
        <taxon>Bacteria</taxon>
        <taxon>Pseudomonadati</taxon>
        <taxon>Pseudomonadota</taxon>
        <taxon>Betaproteobacteria</taxon>
        <taxon>Burkholderiales</taxon>
        <taxon>Oxalobacteraceae</taxon>
        <taxon>Herminiimonas</taxon>
    </lineage>
</organism>
<accession>A4G4B0</accession>
<protein>
    <recommendedName>
        <fullName evidence="1">Ribosomal RNA large subunit methyltransferase E</fullName>
        <ecNumber evidence="1">2.1.1.166</ecNumber>
    </recommendedName>
    <alternativeName>
        <fullName evidence="1">23S rRNA Um2552 methyltransferase</fullName>
    </alternativeName>
    <alternativeName>
        <fullName evidence="1">rRNA (uridine-2'-O-)-methyltransferase</fullName>
    </alternativeName>
</protein>
<sequence>MAKKKLNKNWLHDHINDPYVKLAQKEGYRARAVYKLKEIDESEKLIKPGQIIVDLGCTPGSWSQYVRNKLSGSVGGGINGIIIGLDMLEMEPIADVHYIQGDFREQNVLEQLEVVLAGRKVDLVLSDMAPNLSGIAVADAARMMDIIELAIDFAQHHMKPSGSLLVKCFNGSGFNDIVEKFRHEFKTVTQKKPKASRDKSSEIFLLGKTLKNPL</sequence>
<dbReference type="EC" id="2.1.1.166" evidence="1"/>
<dbReference type="EMBL" id="CU207211">
    <property type="protein sequence ID" value="CAL61347.1"/>
    <property type="molecule type" value="Genomic_DNA"/>
</dbReference>
<dbReference type="SMR" id="A4G4B0"/>
<dbReference type="STRING" id="204773.HEAR1169"/>
<dbReference type="KEGG" id="har:HEAR1169"/>
<dbReference type="eggNOG" id="COG0293">
    <property type="taxonomic scope" value="Bacteria"/>
</dbReference>
<dbReference type="HOGENOM" id="CLU_009422_4_1_4"/>
<dbReference type="OrthoDB" id="9790080at2"/>
<dbReference type="Proteomes" id="UP000006697">
    <property type="component" value="Chromosome"/>
</dbReference>
<dbReference type="GO" id="GO:0005737">
    <property type="term" value="C:cytoplasm"/>
    <property type="evidence" value="ECO:0007669"/>
    <property type="project" value="UniProtKB-SubCell"/>
</dbReference>
<dbReference type="GO" id="GO:0008650">
    <property type="term" value="F:rRNA (uridine-2'-O-)-methyltransferase activity"/>
    <property type="evidence" value="ECO:0007669"/>
    <property type="project" value="UniProtKB-UniRule"/>
</dbReference>
<dbReference type="FunFam" id="3.40.50.150:FF:000005">
    <property type="entry name" value="Ribosomal RNA large subunit methyltransferase E"/>
    <property type="match status" value="1"/>
</dbReference>
<dbReference type="Gene3D" id="3.40.50.150">
    <property type="entry name" value="Vaccinia Virus protein VP39"/>
    <property type="match status" value="1"/>
</dbReference>
<dbReference type="HAMAP" id="MF_01547">
    <property type="entry name" value="RNA_methyltr_E"/>
    <property type="match status" value="1"/>
</dbReference>
<dbReference type="InterPro" id="IPR050082">
    <property type="entry name" value="RNA_methyltr_RlmE"/>
</dbReference>
<dbReference type="InterPro" id="IPR002877">
    <property type="entry name" value="RNA_MeTrfase_FtsJ_dom"/>
</dbReference>
<dbReference type="InterPro" id="IPR015507">
    <property type="entry name" value="rRNA-MeTfrase_E"/>
</dbReference>
<dbReference type="InterPro" id="IPR029063">
    <property type="entry name" value="SAM-dependent_MTases_sf"/>
</dbReference>
<dbReference type="PANTHER" id="PTHR10920">
    <property type="entry name" value="RIBOSOMAL RNA METHYLTRANSFERASE"/>
    <property type="match status" value="1"/>
</dbReference>
<dbReference type="PANTHER" id="PTHR10920:SF18">
    <property type="entry name" value="RRNA METHYLTRANSFERASE 2, MITOCHONDRIAL"/>
    <property type="match status" value="1"/>
</dbReference>
<dbReference type="Pfam" id="PF01728">
    <property type="entry name" value="FtsJ"/>
    <property type="match status" value="1"/>
</dbReference>
<dbReference type="PIRSF" id="PIRSF005461">
    <property type="entry name" value="23S_rRNA_mtase"/>
    <property type="match status" value="1"/>
</dbReference>
<dbReference type="SUPFAM" id="SSF53335">
    <property type="entry name" value="S-adenosyl-L-methionine-dependent methyltransferases"/>
    <property type="match status" value="1"/>
</dbReference>
<evidence type="ECO:0000255" key="1">
    <source>
        <dbReference type="HAMAP-Rule" id="MF_01547"/>
    </source>
</evidence>
<gene>
    <name evidence="1" type="primary">rlmE</name>
    <name evidence="1" type="synonym">ftsJ</name>
    <name evidence="1" type="synonym">rrmJ</name>
    <name type="ordered locus">HEAR1169</name>
</gene>
<proteinExistence type="inferred from homology"/>
<reference key="1">
    <citation type="journal article" date="2007" name="PLoS Genet.">
        <title>A tale of two oxidation states: bacterial colonization of arsenic-rich environments.</title>
        <authorList>
            <person name="Muller D."/>
            <person name="Medigue C."/>
            <person name="Koechler S."/>
            <person name="Barbe V."/>
            <person name="Barakat M."/>
            <person name="Talla E."/>
            <person name="Bonnefoy V."/>
            <person name="Krin E."/>
            <person name="Arsene-Ploetze F."/>
            <person name="Carapito C."/>
            <person name="Chandler M."/>
            <person name="Cournoyer B."/>
            <person name="Cruveiller S."/>
            <person name="Dossat C."/>
            <person name="Duval S."/>
            <person name="Heymann M."/>
            <person name="Leize E."/>
            <person name="Lieutaud A."/>
            <person name="Lievremont D."/>
            <person name="Makita Y."/>
            <person name="Mangenot S."/>
            <person name="Nitschke W."/>
            <person name="Ortet P."/>
            <person name="Perdrial N."/>
            <person name="Schoepp B."/>
            <person name="Siguier P."/>
            <person name="Simeonova D.D."/>
            <person name="Rouy Z."/>
            <person name="Segurens B."/>
            <person name="Turlin E."/>
            <person name="Vallenet D."/>
            <person name="van Dorsselaer A."/>
            <person name="Weiss S."/>
            <person name="Weissenbach J."/>
            <person name="Lett M.-C."/>
            <person name="Danchin A."/>
            <person name="Bertin P.N."/>
        </authorList>
    </citation>
    <scope>NUCLEOTIDE SEQUENCE [LARGE SCALE GENOMIC DNA]</scope>
    <source>
        <strain>ULPAs1</strain>
    </source>
</reference>
<feature type="chain" id="PRO_0000300594" description="Ribosomal RNA large subunit methyltransferase E">
    <location>
        <begin position="1"/>
        <end position="214"/>
    </location>
</feature>
<feature type="active site" description="Proton acceptor" evidence="1">
    <location>
        <position position="167"/>
    </location>
</feature>
<feature type="binding site" evidence="1">
    <location>
        <position position="60"/>
    </location>
    <ligand>
        <name>S-adenosyl-L-methionine</name>
        <dbReference type="ChEBI" id="CHEBI:59789"/>
    </ligand>
</feature>
<feature type="binding site" evidence="1">
    <location>
        <position position="62"/>
    </location>
    <ligand>
        <name>S-adenosyl-L-methionine</name>
        <dbReference type="ChEBI" id="CHEBI:59789"/>
    </ligand>
</feature>
<feature type="binding site" evidence="1">
    <location>
        <position position="86"/>
    </location>
    <ligand>
        <name>S-adenosyl-L-methionine</name>
        <dbReference type="ChEBI" id="CHEBI:59789"/>
    </ligand>
</feature>
<feature type="binding site" evidence="1">
    <location>
        <position position="102"/>
    </location>
    <ligand>
        <name>S-adenosyl-L-methionine</name>
        <dbReference type="ChEBI" id="CHEBI:59789"/>
    </ligand>
</feature>
<feature type="binding site" evidence="1">
    <location>
        <position position="127"/>
    </location>
    <ligand>
        <name>S-adenosyl-L-methionine</name>
        <dbReference type="ChEBI" id="CHEBI:59789"/>
    </ligand>
</feature>
<comment type="function">
    <text evidence="1">Specifically methylates the uridine in position 2552 of 23S rRNA at the 2'-O position of the ribose in the fully assembled 50S ribosomal subunit.</text>
</comment>
<comment type="catalytic activity">
    <reaction evidence="1">
        <text>uridine(2552) in 23S rRNA + S-adenosyl-L-methionine = 2'-O-methyluridine(2552) in 23S rRNA + S-adenosyl-L-homocysteine + H(+)</text>
        <dbReference type="Rhea" id="RHEA:42720"/>
        <dbReference type="Rhea" id="RHEA-COMP:10202"/>
        <dbReference type="Rhea" id="RHEA-COMP:10203"/>
        <dbReference type="ChEBI" id="CHEBI:15378"/>
        <dbReference type="ChEBI" id="CHEBI:57856"/>
        <dbReference type="ChEBI" id="CHEBI:59789"/>
        <dbReference type="ChEBI" id="CHEBI:65315"/>
        <dbReference type="ChEBI" id="CHEBI:74478"/>
        <dbReference type="EC" id="2.1.1.166"/>
    </reaction>
</comment>
<comment type="subcellular location">
    <subcellularLocation>
        <location evidence="1">Cytoplasm</location>
    </subcellularLocation>
</comment>
<comment type="similarity">
    <text evidence="1">Belongs to the class I-like SAM-binding methyltransferase superfamily. RNA methyltransferase RlmE family.</text>
</comment>
<name>RLME_HERAR</name>
<keyword id="KW-0963">Cytoplasm</keyword>
<keyword id="KW-0489">Methyltransferase</keyword>
<keyword id="KW-1185">Reference proteome</keyword>
<keyword id="KW-0698">rRNA processing</keyword>
<keyword id="KW-0949">S-adenosyl-L-methionine</keyword>
<keyword id="KW-0808">Transferase</keyword>